<feature type="chain" id="PRO_0000226875" description="Large ribosomal subunit protein bL19">
    <location>
        <begin position="1"/>
        <end position="116"/>
    </location>
</feature>
<accession>Q4L5U3</accession>
<reference key="1">
    <citation type="journal article" date="2005" name="J. Bacteriol.">
        <title>Whole-genome sequencing of Staphylococcus haemolyticus uncovers the extreme plasticity of its genome and the evolution of human-colonizing staphylococcal species.</title>
        <authorList>
            <person name="Takeuchi F."/>
            <person name="Watanabe S."/>
            <person name="Baba T."/>
            <person name="Yuzawa H."/>
            <person name="Ito T."/>
            <person name="Morimoto Y."/>
            <person name="Kuroda M."/>
            <person name="Cui L."/>
            <person name="Takahashi M."/>
            <person name="Ankai A."/>
            <person name="Baba S."/>
            <person name="Fukui S."/>
            <person name="Lee J.C."/>
            <person name="Hiramatsu K."/>
        </authorList>
    </citation>
    <scope>NUCLEOTIDE SEQUENCE [LARGE SCALE GENOMIC DNA]</scope>
    <source>
        <strain>JCSC1435</strain>
    </source>
</reference>
<sequence length="116" mass="13366">MSNHKLIEAVTKSQLRTDLPTFRTGDTLRVHVRIVEGSRERIQVFEGVVIKRRGGGISETFTVRKISSGVGVERTFPLHTPKIEKIELKRRGKVRRAKLYYLRSLRGKAARIQEIR</sequence>
<name>RL19_STAHJ</name>
<dbReference type="EMBL" id="AP006716">
    <property type="protein sequence ID" value="BAE04982.1"/>
    <property type="molecule type" value="Genomic_DNA"/>
</dbReference>
<dbReference type="RefSeq" id="WP_011275959.1">
    <property type="nucleotide sequence ID" value="NC_007168.1"/>
</dbReference>
<dbReference type="SMR" id="Q4L5U3"/>
<dbReference type="KEGG" id="sha:SH1673"/>
<dbReference type="eggNOG" id="COG0335">
    <property type="taxonomic scope" value="Bacteria"/>
</dbReference>
<dbReference type="HOGENOM" id="CLU_103507_2_1_9"/>
<dbReference type="OrthoDB" id="9803541at2"/>
<dbReference type="Proteomes" id="UP000000543">
    <property type="component" value="Chromosome"/>
</dbReference>
<dbReference type="GO" id="GO:0022625">
    <property type="term" value="C:cytosolic large ribosomal subunit"/>
    <property type="evidence" value="ECO:0007669"/>
    <property type="project" value="TreeGrafter"/>
</dbReference>
<dbReference type="GO" id="GO:0003735">
    <property type="term" value="F:structural constituent of ribosome"/>
    <property type="evidence" value="ECO:0007669"/>
    <property type="project" value="InterPro"/>
</dbReference>
<dbReference type="GO" id="GO:0006412">
    <property type="term" value="P:translation"/>
    <property type="evidence" value="ECO:0007669"/>
    <property type="project" value="UniProtKB-UniRule"/>
</dbReference>
<dbReference type="FunFam" id="2.30.30.790:FF:000001">
    <property type="entry name" value="50S ribosomal protein L19"/>
    <property type="match status" value="1"/>
</dbReference>
<dbReference type="Gene3D" id="2.30.30.790">
    <property type="match status" value="1"/>
</dbReference>
<dbReference type="HAMAP" id="MF_00402">
    <property type="entry name" value="Ribosomal_bL19"/>
    <property type="match status" value="1"/>
</dbReference>
<dbReference type="InterPro" id="IPR001857">
    <property type="entry name" value="Ribosomal_bL19"/>
</dbReference>
<dbReference type="InterPro" id="IPR018257">
    <property type="entry name" value="Ribosomal_bL19_CS"/>
</dbReference>
<dbReference type="InterPro" id="IPR038657">
    <property type="entry name" value="Ribosomal_bL19_sf"/>
</dbReference>
<dbReference type="InterPro" id="IPR008991">
    <property type="entry name" value="Translation_prot_SH3-like_sf"/>
</dbReference>
<dbReference type="NCBIfam" id="TIGR01024">
    <property type="entry name" value="rplS_bact"/>
    <property type="match status" value="1"/>
</dbReference>
<dbReference type="PANTHER" id="PTHR15680:SF9">
    <property type="entry name" value="LARGE RIBOSOMAL SUBUNIT PROTEIN BL19M"/>
    <property type="match status" value="1"/>
</dbReference>
<dbReference type="PANTHER" id="PTHR15680">
    <property type="entry name" value="RIBOSOMAL PROTEIN L19"/>
    <property type="match status" value="1"/>
</dbReference>
<dbReference type="Pfam" id="PF01245">
    <property type="entry name" value="Ribosomal_L19"/>
    <property type="match status" value="1"/>
</dbReference>
<dbReference type="PIRSF" id="PIRSF002191">
    <property type="entry name" value="Ribosomal_L19"/>
    <property type="match status" value="1"/>
</dbReference>
<dbReference type="PRINTS" id="PR00061">
    <property type="entry name" value="RIBOSOMALL19"/>
</dbReference>
<dbReference type="SUPFAM" id="SSF50104">
    <property type="entry name" value="Translation proteins SH3-like domain"/>
    <property type="match status" value="1"/>
</dbReference>
<dbReference type="PROSITE" id="PS01015">
    <property type="entry name" value="RIBOSOMAL_L19"/>
    <property type="match status" value="1"/>
</dbReference>
<organism>
    <name type="scientific">Staphylococcus haemolyticus (strain JCSC1435)</name>
    <dbReference type="NCBI Taxonomy" id="279808"/>
    <lineage>
        <taxon>Bacteria</taxon>
        <taxon>Bacillati</taxon>
        <taxon>Bacillota</taxon>
        <taxon>Bacilli</taxon>
        <taxon>Bacillales</taxon>
        <taxon>Staphylococcaceae</taxon>
        <taxon>Staphylococcus</taxon>
    </lineage>
</organism>
<keyword id="KW-0687">Ribonucleoprotein</keyword>
<keyword id="KW-0689">Ribosomal protein</keyword>
<proteinExistence type="inferred from homology"/>
<gene>
    <name evidence="1" type="primary">rplS</name>
    <name type="ordered locus">SH1673</name>
</gene>
<comment type="function">
    <text evidence="1">This protein is located at the 30S-50S ribosomal subunit interface and may play a role in the structure and function of the aminoacyl-tRNA binding site.</text>
</comment>
<comment type="similarity">
    <text evidence="1">Belongs to the bacterial ribosomal protein bL19 family.</text>
</comment>
<evidence type="ECO:0000255" key="1">
    <source>
        <dbReference type="HAMAP-Rule" id="MF_00402"/>
    </source>
</evidence>
<evidence type="ECO:0000305" key="2"/>
<protein>
    <recommendedName>
        <fullName evidence="1">Large ribosomal subunit protein bL19</fullName>
    </recommendedName>
    <alternativeName>
        <fullName evidence="2">50S ribosomal protein L19</fullName>
    </alternativeName>
</protein>